<gene>
    <name type="primary">DIF1</name>
    <name type="ordered locus">KLTH0D16016g</name>
</gene>
<name>DIF1_LACTC</name>
<accession>C5DFL1</accession>
<reference key="1">
    <citation type="journal article" date="2009" name="Genome Res.">
        <title>Comparative genomics of protoploid Saccharomycetaceae.</title>
        <authorList>
            <consortium name="The Genolevures Consortium"/>
            <person name="Souciet J.-L."/>
            <person name="Dujon B."/>
            <person name="Gaillardin C."/>
            <person name="Johnston M."/>
            <person name="Baret P.V."/>
            <person name="Cliften P."/>
            <person name="Sherman D.J."/>
            <person name="Weissenbach J."/>
            <person name="Westhof E."/>
            <person name="Wincker P."/>
            <person name="Jubin C."/>
            <person name="Poulain J."/>
            <person name="Barbe V."/>
            <person name="Segurens B."/>
            <person name="Artiguenave F."/>
            <person name="Anthouard V."/>
            <person name="Vacherie B."/>
            <person name="Val M.-E."/>
            <person name="Fulton R.S."/>
            <person name="Minx P."/>
            <person name="Wilson R."/>
            <person name="Durrens P."/>
            <person name="Jean G."/>
            <person name="Marck C."/>
            <person name="Martin T."/>
            <person name="Nikolski M."/>
            <person name="Rolland T."/>
            <person name="Seret M.-L."/>
            <person name="Casaregola S."/>
            <person name="Despons L."/>
            <person name="Fairhead C."/>
            <person name="Fischer G."/>
            <person name="Lafontaine I."/>
            <person name="Leh V."/>
            <person name="Lemaire M."/>
            <person name="de Montigny J."/>
            <person name="Neuveglise C."/>
            <person name="Thierry A."/>
            <person name="Blanc-Lenfle I."/>
            <person name="Bleykasten C."/>
            <person name="Diffels J."/>
            <person name="Fritsch E."/>
            <person name="Frangeul L."/>
            <person name="Goeffon A."/>
            <person name="Jauniaux N."/>
            <person name="Kachouri-Lafond R."/>
            <person name="Payen C."/>
            <person name="Potier S."/>
            <person name="Pribylova L."/>
            <person name="Ozanne C."/>
            <person name="Richard G.-F."/>
            <person name="Sacerdot C."/>
            <person name="Straub M.-L."/>
            <person name="Talla E."/>
        </authorList>
    </citation>
    <scope>NUCLEOTIDE SEQUENCE [LARGE SCALE GENOMIC DNA]</scope>
    <source>
        <strain>ATCC 56472 / CBS 6340 / NRRL Y-8284</strain>
    </source>
</reference>
<protein>
    <recommendedName>
        <fullName>Damage-regulated import facilitator 1</fullName>
    </recommendedName>
</protein>
<dbReference type="EMBL" id="CU928168">
    <property type="protein sequence ID" value="CAR22966.1"/>
    <property type="molecule type" value="Genomic_DNA"/>
</dbReference>
<dbReference type="RefSeq" id="XP_002553404.1">
    <property type="nucleotide sequence ID" value="XM_002553358.1"/>
</dbReference>
<dbReference type="FunCoup" id="C5DFL1">
    <property type="interactions" value="63"/>
</dbReference>
<dbReference type="GeneID" id="8295651"/>
<dbReference type="KEGG" id="lth:KLTH0D16016g"/>
<dbReference type="eggNOG" id="ENOG502SG7B">
    <property type="taxonomic scope" value="Eukaryota"/>
</dbReference>
<dbReference type="HOGENOM" id="CLU_121023_0_0_1"/>
<dbReference type="InParanoid" id="C5DFL1"/>
<dbReference type="OMA" id="INQRTMS"/>
<dbReference type="OrthoDB" id="4072855at2759"/>
<dbReference type="Proteomes" id="UP000002036">
    <property type="component" value="Chromosome D"/>
</dbReference>
<dbReference type="GO" id="GO:0005737">
    <property type="term" value="C:cytoplasm"/>
    <property type="evidence" value="ECO:0007669"/>
    <property type="project" value="UniProtKB-SubCell"/>
</dbReference>
<dbReference type="GO" id="GO:0005634">
    <property type="term" value="C:nucleus"/>
    <property type="evidence" value="ECO:0007669"/>
    <property type="project" value="UniProtKB-SubCell"/>
</dbReference>
<dbReference type="InterPro" id="IPR013900">
    <property type="entry name" value="RNR_inhibitor"/>
</dbReference>
<dbReference type="Pfam" id="PF08591">
    <property type="entry name" value="RNR_inhib"/>
    <property type="match status" value="1"/>
</dbReference>
<feature type="chain" id="PRO_0000399013" description="Damage-regulated import facilitator 1">
    <location>
        <begin position="1"/>
        <end position="128"/>
    </location>
</feature>
<feature type="region of interest" description="Disordered" evidence="2">
    <location>
        <begin position="70"/>
        <end position="97"/>
    </location>
</feature>
<proteinExistence type="inferred from homology"/>
<evidence type="ECO:0000250" key="1"/>
<evidence type="ECO:0000256" key="2">
    <source>
        <dbReference type="SAM" id="MobiDB-lite"/>
    </source>
</evidence>
<evidence type="ECO:0000305" key="3"/>
<sequence length="128" mass="14410">MTESPQKRHLGQGIERQNEQYACQGALSTIGMRIRQSVDRGYQVSGAAPAPAARTAASCVQDNSELTIPDYKRVPMPSSKQAPMLVNSRTVSSSSSLEMWENQLDERLEHIDNDIMRNKRAFEQVEDW</sequence>
<comment type="function">
    <text evidence="1">Mediates the nuclear localization of the ribonucleotide reductase.</text>
</comment>
<comment type="subcellular location">
    <subcellularLocation>
        <location evidence="1">Cytoplasm</location>
    </subcellularLocation>
    <subcellularLocation>
        <location evidence="1">Nucleus</location>
    </subcellularLocation>
</comment>
<comment type="similarity">
    <text evidence="3">Belongs to the DIF1/spd1 family.</text>
</comment>
<keyword id="KW-0963">Cytoplasm</keyword>
<keyword id="KW-0539">Nucleus</keyword>
<keyword id="KW-1185">Reference proteome</keyword>
<organism>
    <name type="scientific">Lachancea thermotolerans (strain ATCC 56472 / CBS 6340 / NRRL Y-8284)</name>
    <name type="common">Yeast</name>
    <name type="synonym">Kluyveromyces thermotolerans</name>
    <dbReference type="NCBI Taxonomy" id="559295"/>
    <lineage>
        <taxon>Eukaryota</taxon>
        <taxon>Fungi</taxon>
        <taxon>Dikarya</taxon>
        <taxon>Ascomycota</taxon>
        <taxon>Saccharomycotina</taxon>
        <taxon>Saccharomycetes</taxon>
        <taxon>Saccharomycetales</taxon>
        <taxon>Saccharomycetaceae</taxon>
        <taxon>Lachancea</taxon>
    </lineage>
</organism>